<dbReference type="EC" id="2.5.1.6" evidence="1"/>
<dbReference type="EMBL" id="CP000057">
    <property type="protein sequence ID" value="AAX88172.1"/>
    <property type="molecule type" value="Genomic_DNA"/>
</dbReference>
<dbReference type="RefSeq" id="WP_005660404.1">
    <property type="nucleotide sequence ID" value="NC_007146.2"/>
</dbReference>
<dbReference type="SMR" id="Q4QLC5"/>
<dbReference type="GeneID" id="93220177"/>
<dbReference type="KEGG" id="hit:NTHI1340"/>
<dbReference type="HOGENOM" id="CLU_041802_1_1_6"/>
<dbReference type="UniPathway" id="UPA00315">
    <property type="reaction ID" value="UER00080"/>
</dbReference>
<dbReference type="Proteomes" id="UP000002525">
    <property type="component" value="Chromosome"/>
</dbReference>
<dbReference type="GO" id="GO:0005737">
    <property type="term" value="C:cytoplasm"/>
    <property type="evidence" value="ECO:0007669"/>
    <property type="project" value="UniProtKB-SubCell"/>
</dbReference>
<dbReference type="GO" id="GO:0005524">
    <property type="term" value="F:ATP binding"/>
    <property type="evidence" value="ECO:0007669"/>
    <property type="project" value="UniProtKB-UniRule"/>
</dbReference>
<dbReference type="GO" id="GO:0000287">
    <property type="term" value="F:magnesium ion binding"/>
    <property type="evidence" value="ECO:0007669"/>
    <property type="project" value="UniProtKB-UniRule"/>
</dbReference>
<dbReference type="GO" id="GO:0004478">
    <property type="term" value="F:methionine adenosyltransferase activity"/>
    <property type="evidence" value="ECO:0007669"/>
    <property type="project" value="UniProtKB-UniRule"/>
</dbReference>
<dbReference type="GO" id="GO:0006730">
    <property type="term" value="P:one-carbon metabolic process"/>
    <property type="evidence" value="ECO:0007669"/>
    <property type="project" value="UniProtKB-KW"/>
</dbReference>
<dbReference type="GO" id="GO:0006556">
    <property type="term" value="P:S-adenosylmethionine biosynthetic process"/>
    <property type="evidence" value="ECO:0007669"/>
    <property type="project" value="UniProtKB-UniRule"/>
</dbReference>
<dbReference type="CDD" id="cd18079">
    <property type="entry name" value="S-AdoMet_synt"/>
    <property type="match status" value="1"/>
</dbReference>
<dbReference type="FunFam" id="3.30.300.10:FF:000003">
    <property type="entry name" value="S-adenosylmethionine synthase"/>
    <property type="match status" value="1"/>
</dbReference>
<dbReference type="Gene3D" id="3.30.300.10">
    <property type="match status" value="3"/>
</dbReference>
<dbReference type="HAMAP" id="MF_00086">
    <property type="entry name" value="S_AdoMet_synth1"/>
    <property type="match status" value="1"/>
</dbReference>
<dbReference type="InterPro" id="IPR022631">
    <property type="entry name" value="ADOMET_SYNTHASE_CS"/>
</dbReference>
<dbReference type="InterPro" id="IPR022630">
    <property type="entry name" value="S-AdoMet_synt_C"/>
</dbReference>
<dbReference type="InterPro" id="IPR022629">
    <property type="entry name" value="S-AdoMet_synt_central"/>
</dbReference>
<dbReference type="InterPro" id="IPR022628">
    <property type="entry name" value="S-AdoMet_synt_N"/>
</dbReference>
<dbReference type="InterPro" id="IPR002133">
    <property type="entry name" value="S-AdoMet_synthetase"/>
</dbReference>
<dbReference type="InterPro" id="IPR022636">
    <property type="entry name" value="S-AdoMet_synthetase_sfam"/>
</dbReference>
<dbReference type="NCBIfam" id="TIGR01034">
    <property type="entry name" value="metK"/>
    <property type="match status" value="1"/>
</dbReference>
<dbReference type="PANTHER" id="PTHR11964">
    <property type="entry name" value="S-ADENOSYLMETHIONINE SYNTHETASE"/>
    <property type="match status" value="1"/>
</dbReference>
<dbReference type="Pfam" id="PF02773">
    <property type="entry name" value="S-AdoMet_synt_C"/>
    <property type="match status" value="1"/>
</dbReference>
<dbReference type="Pfam" id="PF02772">
    <property type="entry name" value="S-AdoMet_synt_M"/>
    <property type="match status" value="1"/>
</dbReference>
<dbReference type="Pfam" id="PF00438">
    <property type="entry name" value="S-AdoMet_synt_N"/>
    <property type="match status" value="1"/>
</dbReference>
<dbReference type="PIRSF" id="PIRSF000497">
    <property type="entry name" value="MAT"/>
    <property type="match status" value="1"/>
</dbReference>
<dbReference type="SUPFAM" id="SSF55973">
    <property type="entry name" value="S-adenosylmethionine synthetase"/>
    <property type="match status" value="3"/>
</dbReference>
<dbReference type="PROSITE" id="PS00376">
    <property type="entry name" value="ADOMET_SYNTHASE_1"/>
    <property type="match status" value="1"/>
</dbReference>
<dbReference type="PROSITE" id="PS00377">
    <property type="entry name" value="ADOMET_SYNTHASE_2"/>
    <property type="match status" value="1"/>
</dbReference>
<comment type="function">
    <text evidence="1">Catalyzes the formation of S-adenosylmethionine (AdoMet) from methionine and ATP. The overall synthetic reaction is composed of two sequential steps, AdoMet formation and the subsequent tripolyphosphate hydrolysis which occurs prior to release of AdoMet from the enzyme.</text>
</comment>
<comment type="catalytic activity">
    <reaction evidence="1">
        <text>L-methionine + ATP + H2O = S-adenosyl-L-methionine + phosphate + diphosphate</text>
        <dbReference type="Rhea" id="RHEA:21080"/>
        <dbReference type="ChEBI" id="CHEBI:15377"/>
        <dbReference type="ChEBI" id="CHEBI:30616"/>
        <dbReference type="ChEBI" id="CHEBI:33019"/>
        <dbReference type="ChEBI" id="CHEBI:43474"/>
        <dbReference type="ChEBI" id="CHEBI:57844"/>
        <dbReference type="ChEBI" id="CHEBI:59789"/>
        <dbReference type="EC" id="2.5.1.6"/>
    </reaction>
</comment>
<comment type="cofactor">
    <cofactor evidence="1">
        <name>Mg(2+)</name>
        <dbReference type="ChEBI" id="CHEBI:18420"/>
    </cofactor>
    <text evidence="1">Binds 2 divalent ions per subunit.</text>
</comment>
<comment type="cofactor">
    <cofactor evidence="1">
        <name>K(+)</name>
        <dbReference type="ChEBI" id="CHEBI:29103"/>
    </cofactor>
    <text evidence="1">Binds 1 potassium ion per subunit.</text>
</comment>
<comment type="pathway">
    <text evidence="1">Amino-acid biosynthesis; S-adenosyl-L-methionine biosynthesis; S-adenosyl-L-methionine from L-methionine: step 1/1.</text>
</comment>
<comment type="subunit">
    <text evidence="1">Homotetramer; dimer of dimers.</text>
</comment>
<comment type="subcellular location">
    <subcellularLocation>
        <location evidence="1">Cytoplasm</location>
    </subcellularLocation>
</comment>
<comment type="similarity">
    <text evidence="1">Belongs to the AdoMet synthase family.</text>
</comment>
<reference key="1">
    <citation type="journal article" date="2005" name="J. Bacteriol.">
        <title>Genomic sequence of an otitis media isolate of nontypeable Haemophilus influenzae: comparative study with H. influenzae serotype d, strain KW20.</title>
        <authorList>
            <person name="Harrison A."/>
            <person name="Dyer D.W."/>
            <person name="Gillaspy A."/>
            <person name="Ray W.C."/>
            <person name="Mungur R."/>
            <person name="Carson M.B."/>
            <person name="Zhong H."/>
            <person name="Gipson J."/>
            <person name="Gipson M."/>
            <person name="Johnson L.S."/>
            <person name="Lewis L."/>
            <person name="Bakaletz L.O."/>
            <person name="Munson R.S. Jr."/>
        </authorList>
    </citation>
    <scope>NUCLEOTIDE SEQUENCE [LARGE SCALE GENOMIC DNA]</scope>
    <source>
        <strain>86-028NP</strain>
    </source>
</reference>
<proteinExistence type="inferred from homology"/>
<evidence type="ECO:0000255" key="1">
    <source>
        <dbReference type="HAMAP-Rule" id="MF_00086"/>
    </source>
</evidence>
<organism>
    <name type="scientific">Haemophilus influenzae (strain 86-028NP)</name>
    <dbReference type="NCBI Taxonomy" id="281310"/>
    <lineage>
        <taxon>Bacteria</taxon>
        <taxon>Pseudomonadati</taxon>
        <taxon>Pseudomonadota</taxon>
        <taxon>Gammaproteobacteria</taxon>
        <taxon>Pasteurellales</taxon>
        <taxon>Pasteurellaceae</taxon>
        <taxon>Haemophilus</taxon>
    </lineage>
</organism>
<protein>
    <recommendedName>
        <fullName evidence="1">S-adenosylmethionine synthase</fullName>
        <shortName evidence="1">AdoMet synthase</shortName>
        <ecNumber evidence="1">2.5.1.6</ecNumber>
    </recommendedName>
    <alternativeName>
        <fullName evidence="1">MAT</fullName>
    </alternativeName>
    <alternativeName>
        <fullName evidence="1">Methionine adenosyltransferase</fullName>
    </alternativeName>
</protein>
<feature type="chain" id="PRO_0000240999" description="S-adenosylmethionine synthase">
    <location>
        <begin position="1"/>
        <end position="384"/>
    </location>
</feature>
<feature type="region of interest" description="Flexible loop" evidence="1">
    <location>
        <begin position="99"/>
        <end position="109"/>
    </location>
</feature>
<feature type="binding site" description="in other chain" evidence="1">
    <location>
        <position position="15"/>
    </location>
    <ligand>
        <name>ATP</name>
        <dbReference type="ChEBI" id="CHEBI:30616"/>
        <note>ligand shared between two neighboring subunits</note>
    </ligand>
</feature>
<feature type="binding site" evidence="1">
    <location>
        <position position="17"/>
    </location>
    <ligand>
        <name>Mg(2+)</name>
        <dbReference type="ChEBI" id="CHEBI:18420"/>
    </ligand>
</feature>
<feature type="binding site" evidence="1">
    <location>
        <position position="43"/>
    </location>
    <ligand>
        <name>K(+)</name>
        <dbReference type="ChEBI" id="CHEBI:29103"/>
    </ligand>
</feature>
<feature type="binding site" description="in other chain" evidence="1">
    <location>
        <position position="56"/>
    </location>
    <ligand>
        <name>L-methionine</name>
        <dbReference type="ChEBI" id="CHEBI:57844"/>
        <note>ligand shared between two neighboring subunits</note>
    </ligand>
</feature>
<feature type="binding site" description="in other chain" evidence="1">
    <location>
        <position position="99"/>
    </location>
    <ligand>
        <name>L-methionine</name>
        <dbReference type="ChEBI" id="CHEBI:57844"/>
        <note>ligand shared between two neighboring subunits</note>
    </ligand>
</feature>
<feature type="binding site" description="in other chain" evidence="1">
    <location>
        <begin position="164"/>
        <end position="166"/>
    </location>
    <ligand>
        <name>ATP</name>
        <dbReference type="ChEBI" id="CHEBI:30616"/>
        <note>ligand shared between two neighboring subunits</note>
    </ligand>
</feature>
<feature type="binding site" description="in other chain" evidence="1">
    <location>
        <begin position="230"/>
        <end position="231"/>
    </location>
    <ligand>
        <name>ATP</name>
        <dbReference type="ChEBI" id="CHEBI:30616"/>
        <note>ligand shared between two neighboring subunits</note>
    </ligand>
</feature>
<feature type="binding site" evidence="1">
    <location>
        <position position="239"/>
    </location>
    <ligand>
        <name>ATP</name>
        <dbReference type="ChEBI" id="CHEBI:30616"/>
        <note>ligand shared between two neighboring subunits</note>
    </ligand>
</feature>
<feature type="binding site" evidence="1">
    <location>
        <position position="239"/>
    </location>
    <ligand>
        <name>L-methionine</name>
        <dbReference type="ChEBI" id="CHEBI:57844"/>
        <note>ligand shared between two neighboring subunits</note>
    </ligand>
</feature>
<feature type="binding site" description="in other chain" evidence="1">
    <location>
        <begin position="245"/>
        <end position="246"/>
    </location>
    <ligand>
        <name>ATP</name>
        <dbReference type="ChEBI" id="CHEBI:30616"/>
        <note>ligand shared between two neighboring subunits</note>
    </ligand>
</feature>
<feature type="binding site" evidence="1">
    <location>
        <position position="262"/>
    </location>
    <ligand>
        <name>ATP</name>
        <dbReference type="ChEBI" id="CHEBI:30616"/>
        <note>ligand shared between two neighboring subunits</note>
    </ligand>
</feature>
<feature type="binding site" evidence="1">
    <location>
        <position position="266"/>
    </location>
    <ligand>
        <name>ATP</name>
        <dbReference type="ChEBI" id="CHEBI:30616"/>
        <note>ligand shared between two neighboring subunits</note>
    </ligand>
</feature>
<feature type="binding site" description="in other chain" evidence="1">
    <location>
        <position position="270"/>
    </location>
    <ligand>
        <name>L-methionine</name>
        <dbReference type="ChEBI" id="CHEBI:57844"/>
        <note>ligand shared between two neighboring subunits</note>
    </ligand>
</feature>
<sequence>MSSYLFTSESVSEGHPDKIADQISDAVLDEILKQDPKARVACETYVKTGMALVGGEITTSAWVDIENLTRKVICDIGYEHSEMGFDGHSCAVLNAIGKQSADINQGVDRENPLDQGAGDQGIMFGYATNETDVLMPAAITYAHRLMEKQAEVRKSGKLAWLRPDAKSQVTLKYEDNKIVGVDAVVLSTQHSEEVSQKDLHEGVMEEIIKPVLPTEWLSKETKFFINPTGRFVIGGPMGDCGLTGRKIIVDTYGGAARHGGGAFSGKDPSKVDRSAAYAARYVAKNIVAAGLADRCEIQLSYAIGVADPTSIMVETFGTGKVANELLVSLVREFFDLRPYGLIKMLDLIQPIYRETAAYGHFGREQFPWEKVDRAEDLRIAAGLK</sequence>
<gene>
    <name evidence="1" type="primary">metK</name>
    <name type="ordered locus">NTHI1340</name>
</gene>
<keyword id="KW-0067">ATP-binding</keyword>
<keyword id="KW-0963">Cytoplasm</keyword>
<keyword id="KW-0460">Magnesium</keyword>
<keyword id="KW-0479">Metal-binding</keyword>
<keyword id="KW-0547">Nucleotide-binding</keyword>
<keyword id="KW-0554">One-carbon metabolism</keyword>
<keyword id="KW-0630">Potassium</keyword>
<keyword id="KW-0808">Transferase</keyword>
<accession>Q4QLC5</accession>
<name>METK_HAEI8</name>